<gene>
    <name type="primary">dnaX</name>
    <name type="synonym">dnaH</name>
    <name type="synonym">dnaZ</name>
    <name type="ordered locus">MG419</name>
    <name type="ORF">MG420</name>
</gene>
<evidence type="ECO:0000250" key="1"/>
<evidence type="ECO:0000250" key="2">
    <source>
        <dbReference type="UniProtKB" id="P06710"/>
    </source>
</evidence>
<evidence type="ECO:0000255" key="3"/>
<evidence type="ECO:0000269" key="4">
    <source>
    </source>
</evidence>
<evidence type="ECO:0000305" key="5"/>
<evidence type="ECO:0000305" key="6">
    <source>
    </source>
</evidence>
<sequence length="597" mass="69043">MHQVFYQKYRPINFKQTLGQESIRKILVNAINRDKLPNGYIFSGERGTGKTTFAKIIAKAINCLNWDQIDVCNSCDVCKSINTNSAIDIVEIDAASKNGINDIRELVENVFNHPFTFKKKVYILDEAHMLTTQSWGGLLKTLEESPPYVLFIFTTTEFNKIPLTILSRCQSFFFKKITSDLILERLNDIAKKEKIKIEKDALIKIADLSQGSLRDGLSLLDQISNFSDSEKISITDVEKTFNIVDRNAKFTFIKAVLSGDIKEAFNLLDDFESNGLNFTYFLRELFALTVNLYAYAKLKNINVLDSTEKTMIETLNFEKQHYAFLIKAIEENTNFGLSQLTLIDRLKAIVISYNEFFNQKPLTISSPSNEKSLHLETEYLEKKKIKKSNHKQDQKHFSLFEKSFIDKSEKTPKNDEVTNNKFLDTSKLNLANIALAINAFNDNKWINHFQNLLSVFQTKFNDKDKQNNLSYFNNFIDKYSARDIVKATKIVKASSFGIVILFEDQKIAMRLWKEAIEEGNVQATIFQIFNQNLFLASFSEHQYKTTITEETKNQKYQTEVLNLTQLENLAKPFLKEKKRSLSQKMVDKYFKGLFEEK</sequence>
<dbReference type="EC" id="2.7.7.7"/>
<dbReference type="EMBL" id="L43967">
    <property type="protein sequence ID" value="AAC71650.2"/>
    <property type="molecule type" value="Genomic_DNA"/>
</dbReference>
<dbReference type="PIR" id="D64246">
    <property type="entry name" value="D64246"/>
</dbReference>
<dbReference type="PIR" id="T09748">
    <property type="entry name" value="T09748"/>
</dbReference>
<dbReference type="RefSeq" id="WP_009885609.1">
    <property type="nucleotide sequence ID" value="NC_000908.2"/>
</dbReference>
<dbReference type="SMR" id="P47658"/>
<dbReference type="STRING" id="243273.MG_419"/>
<dbReference type="GeneID" id="88282602"/>
<dbReference type="KEGG" id="mge:MG_419"/>
<dbReference type="eggNOG" id="COG2812">
    <property type="taxonomic scope" value="Bacteria"/>
</dbReference>
<dbReference type="HOGENOM" id="CLU_006229_0_3_14"/>
<dbReference type="InParanoid" id="P47658"/>
<dbReference type="OrthoDB" id="9810148at2"/>
<dbReference type="BioCyc" id="MGEN243273:G1GJ2-514-MONOMER"/>
<dbReference type="Proteomes" id="UP000000807">
    <property type="component" value="Chromosome"/>
</dbReference>
<dbReference type="GO" id="GO:0009360">
    <property type="term" value="C:DNA polymerase III complex"/>
    <property type="evidence" value="ECO:0007669"/>
    <property type="project" value="InterPro"/>
</dbReference>
<dbReference type="GO" id="GO:0005524">
    <property type="term" value="F:ATP binding"/>
    <property type="evidence" value="ECO:0007669"/>
    <property type="project" value="UniProtKB-KW"/>
</dbReference>
<dbReference type="GO" id="GO:0016887">
    <property type="term" value="F:ATP hydrolysis activity"/>
    <property type="evidence" value="ECO:0007669"/>
    <property type="project" value="InterPro"/>
</dbReference>
<dbReference type="GO" id="GO:0003677">
    <property type="term" value="F:DNA binding"/>
    <property type="evidence" value="ECO:0007669"/>
    <property type="project" value="InterPro"/>
</dbReference>
<dbReference type="GO" id="GO:0003887">
    <property type="term" value="F:DNA-directed DNA polymerase activity"/>
    <property type="evidence" value="ECO:0007669"/>
    <property type="project" value="UniProtKB-KW"/>
</dbReference>
<dbReference type="GO" id="GO:0046872">
    <property type="term" value="F:metal ion binding"/>
    <property type="evidence" value="ECO:0007669"/>
    <property type="project" value="UniProtKB-KW"/>
</dbReference>
<dbReference type="GO" id="GO:0006261">
    <property type="term" value="P:DNA-templated DNA replication"/>
    <property type="evidence" value="ECO:0000318"/>
    <property type="project" value="GO_Central"/>
</dbReference>
<dbReference type="CDD" id="cd00009">
    <property type="entry name" value="AAA"/>
    <property type="match status" value="1"/>
</dbReference>
<dbReference type="CDD" id="cd18137">
    <property type="entry name" value="HLD_clamp_pol_III_gamma_tau"/>
    <property type="match status" value="1"/>
</dbReference>
<dbReference type="FunFam" id="1.10.8.60:FF:000013">
    <property type="entry name" value="DNA polymerase III subunit gamma/tau"/>
    <property type="match status" value="1"/>
</dbReference>
<dbReference type="Gene3D" id="1.10.8.60">
    <property type="match status" value="1"/>
</dbReference>
<dbReference type="Gene3D" id="3.40.50.300">
    <property type="entry name" value="P-loop containing nucleotide triphosphate hydrolases"/>
    <property type="match status" value="1"/>
</dbReference>
<dbReference type="InterPro" id="IPR003593">
    <property type="entry name" value="AAA+_ATPase"/>
</dbReference>
<dbReference type="InterPro" id="IPR008921">
    <property type="entry name" value="DNA_pol3_clamp-load_cplx_C"/>
</dbReference>
<dbReference type="InterPro" id="IPR012763">
    <property type="entry name" value="DNA_pol_III_sug/sutau_N"/>
</dbReference>
<dbReference type="InterPro" id="IPR050238">
    <property type="entry name" value="DNA_Rep/Repair_Clamp_Loader"/>
</dbReference>
<dbReference type="InterPro" id="IPR045085">
    <property type="entry name" value="HLD_clamp_pol_III_gamma_tau"/>
</dbReference>
<dbReference type="InterPro" id="IPR027417">
    <property type="entry name" value="P-loop_NTPase"/>
</dbReference>
<dbReference type="NCBIfam" id="TIGR02397">
    <property type="entry name" value="dnaX_nterm"/>
    <property type="match status" value="1"/>
</dbReference>
<dbReference type="NCBIfam" id="NF004549">
    <property type="entry name" value="PRK05896.1"/>
    <property type="match status" value="1"/>
</dbReference>
<dbReference type="PANTHER" id="PTHR11669:SF0">
    <property type="entry name" value="PROTEIN STICHEL-LIKE 2"/>
    <property type="match status" value="1"/>
</dbReference>
<dbReference type="PANTHER" id="PTHR11669">
    <property type="entry name" value="REPLICATION FACTOR C / DNA POLYMERASE III GAMMA-TAU SUBUNIT"/>
    <property type="match status" value="1"/>
</dbReference>
<dbReference type="Pfam" id="PF13177">
    <property type="entry name" value="DNA_pol3_delta2"/>
    <property type="match status" value="1"/>
</dbReference>
<dbReference type="Pfam" id="PF22608">
    <property type="entry name" value="DNAX_ATPase_lid"/>
    <property type="match status" value="1"/>
</dbReference>
<dbReference type="SMART" id="SM00382">
    <property type="entry name" value="AAA"/>
    <property type="match status" value="1"/>
</dbReference>
<dbReference type="SUPFAM" id="SSF52540">
    <property type="entry name" value="P-loop containing nucleoside triphosphate hydrolases"/>
    <property type="match status" value="1"/>
</dbReference>
<dbReference type="SUPFAM" id="SSF48019">
    <property type="entry name" value="post-AAA+ oligomerization domain-like"/>
    <property type="match status" value="1"/>
</dbReference>
<feature type="chain" id="PRO_0000105498" description="DNA polymerase III subunit gamma/tau">
    <location>
        <begin position="1"/>
        <end position="597"/>
    </location>
</feature>
<feature type="binding site" evidence="3">
    <location>
        <begin position="44"/>
        <end position="51"/>
    </location>
    <ligand>
        <name>ATP</name>
        <dbReference type="ChEBI" id="CHEBI:30616"/>
    </ligand>
</feature>
<feature type="binding site" evidence="2">
    <location>
        <position position="63"/>
    </location>
    <ligand>
        <name>Zn(2+)</name>
        <dbReference type="ChEBI" id="CHEBI:29105"/>
    </ligand>
</feature>
<feature type="binding site" evidence="2">
    <location>
        <position position="72"/>
    </location>
    <ligand>
        <name>Zn(2+)</name>
        <dbReference type="ChEBI" id="CHEBI:29105"/>
    </ligand>
</feature>
<feature type="binding site" evidence="2">
    <location>
        <position position="75"/>
    </location>
    <ligand>
        <name>Zn(2+)</name>
        <dbReference type="ChEBI" id="CHEBI:29105"/>
    </ligand>
</feature>
<feature type="binding site" evidence="2">
    <location>
        <position position="78"/>
    </location>
    <ligand>
        <name>Zn(2+)</name>
        <dbReference type="ChEBI" id="CHEBI:29105"/>
    </ligand>
</feature>
<proteinExistence type="inferred from homology"/>
<organism>
    <name type="scientific">Mycoplasma genitalium (strain ATCC 33530 / DSM 19775 / NCTC 10195 / G37)</name>
    <name type="common">Mycoplasmoides genitalium</name>
    <dbReference type="NCBI Taxonomy" id="243273"/>
    <lineage>
        <taxon>Bacteria</taxon>
        <taxon>Bacillati</taxon>
        <taxon>Mycoplasmatota</taxon>
        <taxon>Mycoplasmoidales</taxon>
        <taxon>Mycoplasmoidaceae</taxon>
        <taxon>Mycoplasmoides</taxon>
    </lineage>
</organism>
<keyword id="KW-0067">ATP-binding</keyword>
<keyword id="KW-0235">DNA replication</keyword>
<keyword id="KW-0239">DNA-directed DNA polymerase</keyword>
<keyword id="KW-0479">Metal-binding</keyword>
<keyword id="KW-0547">Nucleotide-binding</keyword>
<keyword id="KW-0548">Nucleotidyltransferase</keyword>
<keyword id="KW-1185">Reference proteome</keyword>
<keyword id="KW-0808">Transferase</keyword>
<keyword id="KW-0862">Zinc</keyword>
<name>DPO3X_MYCGE</name>
<reference key="1">
    <citation type="journal article" date="1995" name="Science">
        <title>The minimal gene complement of Mycoplasma genitalium.</title>
        <authorList>
            <person name="Fraser C.M."/>
            <person name="Gocayne J.D."/>
            <person name="White O."/>
            <person name="Adams M.D."/>
            <person name="Clayton R.A."/>
            <person name="Fleischmann R.D."/>
            <person name="Bult C.J."/>
            <person name="Kerlavage A.R."/>
            <person name="Sutton G.G."/>
            <person name="Kelley J.M."/>
            <person name="Fritchman J.L."/>
            <person name="Weidman J.F."/>
            <person name="Small K.V."/>
            <person name="Sandusky M."/>
            <person name="Fuhrmann J.L."/>
            <person name="Nguyen D.T."/>
            <person name="Utterback T.R."/>
            <person name="Saudek D.M."/>
            <person name="Phillips C.A."/>
            <person name="Merrick J.M."/>
            <person name="Tomb J.-F."/>
            <person name="Dougherty B.A."/>
            <person name="Bott K.F."/>
            <person name="Hu P.-C."/>
            <person name="Lucier T.S."/>
            <person name="Peterson S.N."/>
            <person name="Smith H.O."/>
            <person name="Hutchison C.A. III"/>
            <person name="Venter J.C."/>
        </authorList>
    </citation>
    <scope>NUCLEOTIDE SEQUENCE [LARGE SCALE GENOMIC DNA]</scope>
    <source>
        <strain>ATCC 33530 / DSM 19775 / NCTC 10195 / G37</strain>
    </source>
</reference>
<reference key="2">
    <citation type="submission" date="2005-09" db="EMBL/GenBank/DDBJ databases">
        <authorList>
            <person name="Fraser C.M."/>
            <person name="Gocayne J.D."/>
            <person name="White O."/>
            <person name="Adams M.D."/>
            <person name="Clayton R.A."/>
            <person name="Fleischmann R.D."/>
            <person name="Bult C.J."/>
            <person name="Kerlavage A.R."/>
            <person name="Sutton G.G."/>
            <person name="Kelley J.M."/>
            <person name="Fritchman J.L."/>
            <person name="Weidman J.F."/>
            <person name="Small K.V."/>
            <person name="Sandusky M."/>
            <person name="Fuhrmann J.L."/>
            <person name="Nguyen D.T."/>
            <person name="Utterback T.R."/>
            <person name="Saudek D.M."/>
            <person name="Phillips C.A."/>
            <person name="Merrick J.M."/>
            <person name="Tomb J.-F."/>
            <person name="Dougherty B.A."/>
            <person name="Bott K.F."/>
            <person name="Hu P.-C."/>
            <person name="Lucier T.S."/>
            <person name="Peterson S.N."/>
            <person name="Smith H.O."/>
            <person name="Hutchison C.A. III"/>
            <person name="Venter J.C."/>
        </authorList>
    </citation>
    <scope>SEQUENCE REVISION</scope>
</reference>
<reference key="3">
    <citation type="journal article" date="2006" name="Proc. Natl. Acad. Sci. U.S.A.">
        <title>Essential genes of a minimal bacterium.</title>
        <authorList>
            <person name="Glass J.I."/>
            <person name="Assad-Garcia N."/>
            <person name="Alperovich N."/>
            <person name="Yooseph S."/>
            <person name="Lewis M.R."/>
            <person name="Maruf M."/>
            <person name="Hutchison C.A. III"/>
            <person name="Smith H.O."/>
            <person name="Venter J.C."/>
        </authorList>
    </citation>
    <scope>DISRUPTION PHENOTYPE</scope>
    <source>
        <strain>ATCC 33530 / DSM 19775 / NCTC 10195 / G37</strain>
    </source>
</reference>
<comment type="function">
    <text>DNA polymerase III is a complex, multichain enzyme responsible for most of the replicative synthesis in bacteria. This DNA polymerase also exhibits 3' to 5' exonuclease activity.</text>
</comment>
<comment type="catalytic activity">
    <reaction>
        <text>DNA(n) + a 2'-deoxyribonucleoside 5'-triphosphate = DNA(n+1) + diphosphate</text>
        <dbReference type="Rhea" id="RHEA:22508"/>
        <dbReference type="Rhea" id="RHEA-COMP:17339"/>
        <dbReference type="Rhea" id="RHEA-COMP:17340"/>
        <dbReference type="ChEBI" id="CHEBI:33019"/>
        <dbReference type="ChEBI" id="CHEBI:61560"/>
        <dbReference type="ChEBI" id="CHEBI:173112"/>
        <dbReference type="EC" id="2.7.7.7"/>
    </reaction>
</comment>
<comment type="subunit">
    <text evidence="1">DNA polymerase III contains a core (composed of alpha, epsilon and theta chains) that associates with a tau subunit. This core dimerizes to form the POLIII' complex. PolIII' associates with the gamma complex (composed of gamma, delta, delta', psi and chi chains) and with the beta chain to form the complete DNA polymerase III complex (By similarity).</text>
</comment>
<comment type="disruption phenotype">
    <text evidence="4">Probably essential, it was not disrupted in a global transposon mutagenesis study.</text>
</comment>
<comment type="similarity">
    <text evidence="5">Belongs to the DnaX/STICHEL family.</text>
</comment>
<comment type="caution">
    <text evidence="6">Was originally thought to be two separate ORFs named DnaX and DnaZ.</text>
</comment>
<accession>P47658</accession>
<accession>P47659</accession>
<protein>
    <recommendedName>
        <fullName>DNA polymerase III subunit gamma/tau</fullName>
        <ecNumber>2.7.7.7</ecNumber>
    </recommendedName>
</protein>